<accession>P54810</accession>
<protein>
    <recommendedName>
        <fullName>Acetyl-CoA acetyltransferase</fullName>
        <ecNumber>2.3.1.9</ecNumber>
    </recommendedName>
    <alternativeName>
        <fullName>Acetoacetyl-CoA thiolase</fullName>
    </alternativeName>
</protein>
<name>THIL_PARDE</name>
<organism>
    <name type="scientific">Paracoccus denitrificans</name>
    <dbReference type="NCBI Taxonomy" id="266"/>
    <lineage>
        <taxon>Bacteria</taxon>
        <taxon>Pseudomonadati</taxon>
        <taxon>Pseudomonadota</taxon>
        <taxon>Alphaproteobacteria</taxon>
        <taxon>Rhodobacterales</taxon>
        <taxon>Paracoccaceae</taxon>
        <taxon>Paracoccus</taxon>
    </lineage>
</organism>
<sequence length="391" mass="40745">MTKAVIVSAARTPVGSFLGSFANLPAHELGAIVLKAVVERAGIDPSEVSETILGQVLTAAQGQNPARQAHIKVGLPRESAAWVINQVCGSGLRTVALAAQQVLLGDARIVVAGGQESMSLAPHAAYIAPGQKMGDMKMLDTMIKDGLWDAFNDYHMGTTAENVAGKWEISRAEQDQFAVASQNKAEAAQKAGKFADEIVPVTIKSRKGETVVDADEYIRHGATLEAMENVRPAFSKEGTVTAGNASGLNDGAAAVLVMTEDEAARRGLTPLARIASYATAGVDPQIMGTGPIPASRKALEKAGWSVGDLDLVEANEAFAAQAIAVNRDMGWDPSIVNVNGGAIAIGHPIGASGCRILNTLLFEMQRRDAKKGLATLCIGGGMGVALCLERP</sequence>
<comment type="catalytic activity">
    <reaction evidence="2">
        <text>2 acetyl-CoA = acetoacetyl-CoA + CoA</text>
        <dbReference type="Rhea" id="RHEA:21036"/>
        <dbReference type="ChEBI" id="CHEBI:57286"/>
        <dbReference type="ChEBI" id="CHEBI:57287"/>
        <dbReference type="ChEBI" id="CHEBI:57288"/>
        <dbReference type="EC" id="2.3.1.9"/>
    </reaction>
</comment>
<comment type="pathway">
    <text>Metabolic intermediate biosynthesis; (R)-mevalonate biosynthesis; (R)-mevalonate from acetyl-CoA: step 1/3.</text>
</comment>
<comment type="subunit">
    <text evidence="1">Homotetramer.</text>
</comment>
<comment type="subcellular location">
    <subcellularLocation>
        <location>Cytoplasm</location>
    </subcellularLocation>
</comment>
<comment type="similarity">
    <text evidence="3">Belongs to the thiolase-like superfamily. Thiolase family.</text>
</comment>
<keyword id="KW-0012">Acyltransferase</keyword>
<keyword id="KW-0963">Cytoplasm</keyword>
<keyword id="KW-0583">PHB biosynthesis</keyword>
<keyword id="KW-0808">Transferase</keyword>
<reference key="1">
    <citation type="journal article" date="1995" name="FEMS Microbiol. Lett.">
        <title>Analysis of beta-ketothiolase and acetoacetyl-CoA reductase genes of a methylotrophic bacterium, Paracoccus denitrificans, and their expression in Escherichia coli.</title>
        <authorList>
            <person name="Yabutani T."/>
            <person name="Maehara A."/>
            <person name="Ueda S."/>
            <person name="Yamane T."/>
        </authorList>
    </citation>
    <scope>NUCLEOTIDE SEQUENCE [GENOMIC DNA]</scope>
</reference>
<proteinExistence type="inferred from homology"/>
<dbReference type="EC" id="2.3.1.9"/>
<dbReference type="EMBL" id="D49362">
    <property type="protein sequence ID" value="BAA08357.1"/>
    <property type="molecule type" value="Genomic_DNA"/>
</dbReference>
<dbReference type="SMR" id="P54810"/>
<dbReference type="UniPathway" id="UPA00058">
    <property type="reaction ID" value="UER00101"/>
</dbReference>
<dbReference type="GO" id="GO:0005737">
    <property type="term" value="C:cytoplasm"/>
    <property type="evidence" value="ECO:0007669"/>
    <property type="project" value="UniProtKB-SubCell"/>
</dbReference>
<dbReference type="GO" id="GO:0003985">
    <property type="term" value="F:acetyl-CoA C-acetyltransferase activity"/>
    <property type="evidence" value="ECO:0007669"/>
    <property type="project" value="UniProtKB-EC"/>
</dbReference>
<dbReference type="GO" id="GO:0042619">
    <property type="term" value="P:poly-hydroxybutyrate biosynthetic process"/>
    <property type="evidence" value="ECO:0007669"/>
    <property type="project" value="UniProtKB-KW"/>
</dbReference>
<dbReference type="CDD" id="cd00751">
    <property type="entry name" value="thiolase"/>
    <property type="match status" value="1"/>
</dbReference>
<dbReference type="FunFam" id="3.40.47.10:FF:000010">
    <property type="entry name" value="Acetyl-CoA acetyltransferase (Thiolase)"/>
    <property type="match status" value="1"/>
</dbReference>
<dbReference type="Gene3D" id="3.40.47.10">
    <property type="match status" value="2"/>
</dbReference>
<dbReference type="InterPro" id="IPR002155">
    <property type="entry name" value="Thiolase"/>
</dbReference>
<dbReference type="InterPro" id="IPR016039">
    <property type="entry name" value="Thiolase-like"/>
</dbReference>
<dbReference type="InterPro" id="IPR020615">
    <property type="entry name" value="Thiolase_acyl_enz_int_AS"/>
</dbReference>
<dbReference type="InterPro" id="IPR020610">
    <property type="entry name" value="Thiolase_AS"/>
</dbReference>
<dbReference type="InterPro" id="IPR020617">
    <property type="entry name" value="Thiolase_C"/>
</dbReference>
<dbReference type="InterPro" id="IPR020613">
    <property type="entry name" value="Thiolase_CS"/>
</dbReference>
<dbReference type="InterPro" id="IPR020616">
    <property type="entry name" value="Thiolase_N"/>
</dbReference>
<dbReference type="NCBIfam" id="TIGR01930">
    <property type="entry name" value="AcCoA-C-Actrans"/>
    <property type="match status" value="1"/>
</dbReference>
<dbReference type="PANTHER" id="PTHR18919:SF107">
    <property type="entry name" value="ACETYL-COA ACETYLTRANSFERASE, CYTOSOLIC"/>
    <property type="match status" value="1"/>
</dbReference>
<dbReference type="PANTHER" id="PTHR18919">
    <property type="entry name" value="ACETYL-COA C-ACYLTRANSFERASE"/>
    <property type="match status" value="1"/>
</dbReference>
<dbReference type="Pfam" id="PF02803">
    <property type="entry name" value="Thiolase_C"/>
    <property type="match status" value="1"/>
</dbReference>
<dbReference type="Pfam" id="PF00108">
    <property type="entry name" value="Thiolase_N"/>
    <property type="match status" value="1"/>
</dbReference>
<dbReference type="PIRSF" id="PIRSF000429">
    <property type="entry name" value="Ac-CoA_Ac_transf"/>
    <property type="match status" value="1"/>
</dbReference>
<dbReference type="SUPFAM" id="SSF53901">
    <property type="entry name" value="Thiolase-like"/>
    <property type="match status" value="2"/>
</dbReference>
<dbReference type="PROSITE" id="PS00098">
    <property type="entry name" value="THIOLASE_1"/>
    <property type="match status" value="1"/>
</dbReference>
<dbReference type="PROSITE" id="PS00737">
    <property type="entry name" value="THIOLASE_2"/>
    <property type="match status" value="1"/>
</dbReference>
<dbReference type="PROSITE" id="PS00099">
    <property type="entry name" value="THIOLASE_3"/>
    <property type="match status" value="1"/>
</dbReference>
<evidence type="ECO:0000250" key="1"/>
<evidence type="ECO:0000255" key="2">
    <source>
        <dbReference type="PROSITE-ProRule" id="PRU10020"/>
    </source>
</evidence>
<evidence type="ECO:0000305" key="3"/>
<feature type="chain" id="PRO_0000206460" description="Acetyl-CoA acetyltransferase">
    <location>
        <begin position="1"/>
        <end position="391"/>
    </location>
</feature>
<feature type="active site" description="Acyl-thioester intermediate" evidence="1">
    <location>
        <position position="88"/>
    </location>
</feature>
<feature type="active site" description="Proton acceptor" evidence="2">
    <location>
        <position position="347"/>
    </location>
</feature>
<feature type="active site" description="Proton acceptor" evidence="2">
    <location>
        <position position="377"/>
    </location>
</feature>
<gene>
    <name type="primary">phaA</name>
</gene>